<gene>
    <name evidence="1" type="primary">rapZ</name>
    <name type="ordered locus">SG0196</name>
</gene>
<sequence length="284" mass="32214">MVLMIVSGRSGSGKSVALRALEDMGFYCVDNLPVVLLPQLASALAASNISAAVSIDVRNMPESPEIFEQAMDNLPQAFAPQLLFLDADRNTLIRRYSDTRRLHPLSALNLSLESAIDEEDSLLEPLRSRADLVIDTSEMSVHELAEMLRTRMLGKRERELTMVFESFGYKHGIPIDADYVFDVRFLPNPHWDPKLRPMTGLDRPVAAFLDRHTEVHNFIYQTRSYLELWLPMLETNNRSYLTVAVGCTGGKHRSVYIAEQLADYFRSRGKNAQSRHRTLEKSKS</sequence>
<protein>
    <recommendedName>
        <fullName evidence="1">RNase adapter protein RapZ</fullName>
    </recommendedName>
</protein>
<dbReference type="EMBL" id="AP008232">
    <property type="protein sequence ID" value="BAE73471.1"/>
    <property type="molecule type" value="Genomic_DNA"/>
</dbReference>
<dbReference type="RefSeq" id="WP_011410060.1">
    <property type="nucleotide sequence ID" value="NC_007712.1"/>
</dbReference>
<dbReference type="SMR" id="Q2NWK4"/>
<dbReference type="STRING" id="343509.SG0196"/>
<dbReference type="KEGG" id="sgl:SG0196"/>
<dbReference type="eggNOG" id="COG1660">
    <property type="taxonomic scope" value="Bacteria"/>
</dbReference>
<dbReference type="HOGENOM" id="CLU_059558_1_1_6"/>
<dbReference type="OrthoDB" id="9784461at2"/>
<dbReference type="BioCyc" id="SGLO343509:SGP1_RS01895-MONOMER"/>
<dbReference type="Proteomes" id="UP000001932">
    <property type="component" value="Chromosome"/>
</dbReference>
<dbReference type="GO" id="GO:0005524">
    <property type="term" value="F:ATP binding"/>
    <property type="evidence" value="ECO:0007669"/>
    <property type="project" value="UniProtKB-UniRule"/>
</dbReference>
<dbReference type="GO" id="GO:0005525">
    <property type="term" value="F:GTP binding"/>
    <property type="evidence" value="ECO:0007669"/>
    <property type="project" value="UniProtKB-UniRule"/>
</dbReference>
<dbReference type="GO" id="GO:0003723">
    <property type="term" value="F:RNA binding"/>
    <property type="evidence" value="ECO:0007669"/>
    <property type="project" value="UniProtKB-KW"/>
</dbReference>
<dbReference type="Gene3D" id="3.40.50.300">
    <property type="entry name" value="P-loop containing nucleotide triphosphate hydrolases"/>
    <property type="match status" value="1"/>
</dbReference>
<dbReference type="HAMAP" id="MF_00636">
    <property type="entry name" value="RapZ_like"/>
    <property type="match status" value="1"/>
</dbReference>
<dbReference type="InterPro" id="IPR027417">
    <property type="entry name" value="P-loop_NTPase"/>
</dbReference>
<dbReference type="InterPro" id="IPR005337">
    <property type="entry name" value="RapZ-like"/>
</dbReference>
<dbReference type="InterPro" id="IPR053930">
    <property type="entry name" value="RapZ-like_N"/>
</dbReference>
<dbReference type="InterPro" id="IPR053931">
    <property type="entry name" value="RapZ_C"/>
</dbReference>
<dbReference type="NCBIfam" id="NF003828">
    <property type="entry name" value="PRK05416.1"/>
    <property type="match status" value="1"/>
</dbReference>
<dbReference type="PANTHER" id="PTHR30448">
    <property type="entry name" value="RNASE ADAPTER PROTEIN RAPZ"/>
    <property type="match status" value="1"/>
</dbReference>
<dbReference type="PANTHER" id="PTHR30448:SF0">
    <property type="entry name" value="RNASE ADAPTER PROTEIN RAPZ"/>
    <property type="match status" value="1"/>
</dbReference>
<dbReference type="Pfam" id="PF22740">
    <property type="entry name" value="PapZ_C"/>
    <property type="match status" value="1"/>
</dbReference>
<dbReference type="Pfam" id="PF03668">
    <property type="entry name" value="RapZ-like_N"/>
    <property type="match status" value="1"/>
</dbReference>
<dbReference type="PIRSF" id="PIRSF005052">
    <property type="entry name" value="P-loopkin"/>
    <property type="match status" value="1"/>
</dbReference>
<dbReference type="SUPFAM" id="SSF52540">
    <property type="entry name" value="P-loop containing nucleoside triphosphate hydrolases"/>
    <property type="match status" value="1"/>
</dbReference>
<proteinExistence type="inferred from homology"/>
<accession>Q2NWK4</accession>
<reference key="1">
    <citation type="journal article" date="2006" name="Genome Res.">
        <title>Massive genome erosion and functional adaptations provide insights into the symbiotic lifestyle of Sodalis glossinidius in the tsetse host.</title>
        <authorList>
            <person name="Toh H."/>
            <person name="Weiss B.L."/>
            <person name="Perkin S.A.H."/>
            <person name="Yamashita A."/>
            <person name="Oshima K."/>
            <person name="Hattori M."/>
            <person name="Aksoy S."/>
        </authorList>
    </citation>
    <scope>NUCLEOTIDE SEQUENCE [LARGE SCALE GENOMIC DNA]</scope>
    <source>
        <strain>morsitans</strain>
    </source>
</reference>
<organism>
    <name type="scientific">Sodalis glossinidius (strain morsitans)</name>
    <dbReference type="NCBI Taxonomy" id="343509"/>
    <lineage>
        <taxon>Bacteria</taxon>
        <taxon>Pseudomonadati</taxon>
        <taxon>Pseudomonadota</taxon>
        <taxon>Gammaproteobacteria</taxon>
        <taxon>Enterobacterales</taxon>
        <taxon>Bruguierivoracaceae</taxon>
        <taxon>Sodalis</taxon>
    </lineage>
</organism>
<evidence type="ECO:0000255" key="1">
    <source>
        <dbReference type="HAMAP-Rule" id="MF_00636"/>
    </source>
</evidence>
<comment type="function">
    <text evidence="1">Modulates the synthesis of GlmS, by affecting the processing and stability of the regulatory small RNA GlmZ. When glucosamine-6-phosphate (GlcN6P) concentrations are high in the cell, RapZ binds GlmZ and targets it to cleavage by RNase E. Consequently, GlmZ is inactivated and unable to activate GlmS synthesis. Under low GlcN6P concentrations, RapZ is sequestered and inactivated by an other regulatory small RNA, GlmY, preventing GlmZ degradation and leading to synthesis of GlmS.</text>
</comment>
<comment type="subunit">
    <text evidence="1">Homotrimer.</text>
</comment>
<comment type="similarity">
    <text evidence="1">Belongs to the RapZ-like family. RapZ subfamily.</text>
</comment>
<name>RAPZ_SODGM</name>
<keyword id="KW-0067">ATP-binding</keyword>
<keyword id="KW-0342">GTP-binding</keyword>
<keyword id="KW-0547">Nucleotide-binding</keyword>
<keyword id="KW-0694">RNA-binding</keyword>
<feature type="chain" id="PRO_0000259001" description="RNase adapter protein RapZ">
    <location>
        <begin position="1"/>
        <end position="284"/>
    </location>
</feature>
<feature type="region of interest" description="RNA-binding" evidence="1">
    <location>
        <begin position="266"/>
        <end position="284"/>
    </location>
</feature>
<feature type="binding site" evidence="1">
    <location>
        <begin position="8"/>
        <end position="15"/>
    </location>
    <ligand>
        <name>ATP</name>
        <dbReference type="ChEBI" id="CHEBI:30616"/>
    </ligand>
</feature>
<feature type="binding site" evidence="1">
    <location>
        <begin position="56"/>
        <end position="59"/>
    </location>
    <ligand>
        <name>GTP</name>
        <dbReference type="ChEBI" id="CHEBI:37565"/>
    </ligand>
</feature>